<keyword id="KW-0963">Cytoplasm</keyword>
<keyword id="KW-0903">Direct protein sequencing</keyword>
<keyword id="KW-0808">Transferase</keyword>
<protein>
    <recommendedName>
        <fullName>Glutathione S-transferase</fullName>
        <ecNumber>2.5.1.18</ecNumber>
    </recommendedName>
</protein>
<feature type="chain" id="PRO_0000185979" description="Glutathione S-transferase">
    <location>
        <begin position="1"/>
        <end position="15" status="greater than"/>
    </location>
</feature>
<feature type="non-terminal residue" evidence="2">
    <location>
        <position position="15"/>
    </location>
</feature>
<sequence length="15" mass="1817">MDYLITFYHSPQTNS</sequence>
<name>GSTE1_PSEUO</name>
<accession>P82999</accession>
<reference evidence="3" key="1">
    <citation type="journal article" date="2002" name="Res. Microbiol.">
        <title>Occurrence and properties of glutathione S-transferases in phenol-degrading Pseudomonas strains.</title>
        <authorList>
            <person name="Santos P.M."/>
            <person name="Mignogna G."/>
            <person name="Heipieper H.J."/>
            <person name="Zennaro E."/>
        </authorList>
    </citation>
    <scope>PROTEIN SEQUENCE</scope>
    <scope>FUNCTION</scope>
    <scope>CATALYTIC ACTIVITY</scope>
    <scope>SUBUNIT</scope>
    <scope>SUBCELLULAR LOCATION</scope>
</reference>
<evidence type="ECO:0000269" key="1">
    <source>
    </source>
</evidence>
<evidence type="ECO:0000303" key="2">
    <source>
    </source>
</evidence>
<evidence type="ECO:0000305" key="3"/>
<proteinExistence type="evidence at protein level"/>
<organism evidence="3">
    <name type="scientific">Pseudomonas sp. (strain M1)</name>
    <dbReference type="NCBI Taxonomy" id="95619"/>
    <lineage>
        <taxon>Bacteria</taxon>
        <taxon>Pseudomonadati</taxon>
        <taxon>Pseudomonadota</taxon>
        <taxon>Gammaproteobacteria</taxon>
        <taxon>Pseudomonadales</taxon>
        <taxon>Pseudomonadaceae</taxon>
        <taxon>Pseudomonas</taxon>
    </lineage>
</organism>
<dbReference type="EC" id="2.5.1.18"/>
<dbReference type="GO" id="GO:0005737">
    <property type="term" value="C:cytoplasm"/>
    <property type="evidence" value="ECO:0000303"/>
    <property type="project" value="UniProtKB"/>
</dbReference>
<dbReference type="GO" id="GO:0004364">
    <property type="term" value="F:glutathione transferase activity"/>
    <property type="evidence" value="ECO:0000303"/>
    <property type="project" value="UniProtKB"/>
</dbReference>
<comment type="function">
    <text evidence="1">Conjugation of reduced glutathione to a wide number of exogenous and endogenous hydrophobic electrophiles.</text>
</comment>
<comment type="catalytic activity">
    <reaction evidence="1">
        <text>RX + glutathione = an S-substituted glutathione + a halide anion + H(+)</text>
        <dbReference type="Rhea" id="RHEA:16437"/>
        <dbReference type="ChEBI" id="CHEBI:15378"/>
        <dbReference type="ChEBI" id="CHEBI:16042"/>
        <dbReference type="ChEBI" id="CHEBI:17792"/>
        <dbReference type="ChEBI" id="CHEBI:57925"/>
        <dbReference type="ChEBI" id="CHEBI:90779"/>
        <dbReference type="EC" id="2.5.1.18"/>
    </reaction>
</comment>
<comment type="subunit">
    <text evidence="1">Monomer and homodimer.</text>
</comment>
<comment type="subcellular location">
    <subcellularLocation>
        <location evidence="1">Cytoplasm</location>
    </subcellularLocation>
</comment>
<comment type="similarity">
    <text evidence="3">Belongs to the GST superfamily.</text>
</comment>